<reference key="1">
    <citation type="journal article" date="2008" name="DNA Res.">
        <title>Complete genome sequence and comparative analysis of the wild-type commensal Escherichia coli strain SE11 isolated from a healthy adult.</title>
        <authorList>
            <person name="Oshima K."/>
            <person name="Toh H."/>
            <person name="Ogura Y."/>
            <person name="Sasamoto H."/>
            <person name="Morita H."/>
            <person name="Park S.-H."/>
            <person name="Ooka T."/>
            <person name="Iyoda S."/>
            <person name="Taylor T.D."/>
            <person name="Hayashi T."/>
            <person name="Itoh K."/>
            <person name="Hattori M."/>
        </authorList>
    </citation>
    <scope>NUCLEOTIDE SEQUENCE [LARGE SCALE GENOMIC DNA]</scope>
    <source>
        <strain>SE11</strain>
    </source>
</reference>
<proteinExistence type="inferred from homology"/>
<keyword id="KW-0067">ATP-binding</keyword>
<keyword id="KW-0460">Magnesium</keyword>
<keyword id="KW-0511">Multifunctional enzyme</keyword>
<keyword id="KW-0547">Nucleotide-binding</keyword>
<keyword id="KW-0548">Nucleotidyltransferase</keyword>
<keyword id="KW-0808">Transferase</keyword>
<name>GLNE_ECOSE</name>
<dbReference type="EC" id="2.7.7.89" evidence="1"/>
<dbReference type="EC" id="2.7.7.42" evidence="1"/>
<dbReference type="EMBL" id="AP009240">
    <property type="protein sequence ID" value="BAG78857.1"/>
    <property type="molecule type" value="Genomic_DNA"/>
</dbReference>
<dbReference type="RefSeq" id="WP_001298736.1">
    <property type="nucleotide sequence ID" value="NC_011415.1"/>
</dbReference>
<dbReference type="SMR" id="B6I424"/>
<dbReference type="KEGG" id="ecy:ECSE_3333"/>
<dbReference type="HOGENOM" id="CLU_006233_0_1_6"/>
<dbReference type="Proteomes" id="UP000008199">
    <property type="component" value="Chromosome"/>
</dbReference>
<dbReference type="GO" id="GO:0005829">
    <property type="term" value="C:cytosol"/>
    <property type="evidence" value="ECO:0007669"/>
    <property type="project" value="TreeGrafter"/>
</dbReference>
<dbReference type="GO" id="GO:0008882">
    <property type="term" value="F:[glutamate-ammonia-ligase] adenylyltransferase activity"/>
    <property type="evidence" value="ECO:0007669"/>
    <property type="project" value="UniProtKB-UniRule"/>
</dbReference>
<dbReference type="GO" id="GO:0047388">
    <property type="term" value="F:[glutamine synthetase]-adenylyl-L-tyrosine phosphorylase activity"/>
    <property type="evidence" value="ECO:0007669"/>
    <property type="project" value="UniProtKB-EC"/>
</dbReference>
<dbReference type="GO" id="GO:0005524">
    <property type="term" value="F:ATP binding"/>
    <property type="evidence" value="ECO:0007669"/>
    <property type="project" value="UniProtKB-UniRule"/>
</dbReference>
<dbReference type="GO" id="GO:0000287">
    <property type="term" value="F:magnesium ion binding"/>
    <property type="evidence" value="ECO:0007669"/>
    <property type="project" value="UniProtKB-UniRule"/>
</dbReference>
<dbReference type="GO" id="GO:0000820">
    <property type="term" value="P:regulation of glutamine family amino acid metabolic process"/>
    <property type="evidence" value="ECO:0007669"/>
    <property type="project" value="UniProtKB-UniRule"/>
</dbReference>
<dbReference type="CDD" id="cd05401">
    <property type="entry name" value="NT_GlnE_GlnD_like"/>
    <property type="match status" value="2"/>
</dbReference>
<dbReference type="FunFam" id="1.10.4050.10:FF:000001">
    <property type="entry name" value="Bifunctional glutamine synthetase adenylyltransferase/adenylyl-removing enzyme"/>
    <property type="match status" value="1"/>
</dbReference>
<dbReference type="FunFam" id="1.20.120.1510:FF:000001">
    <property type="entry name" value="Bifunctional glutamine synthetase adenylyltransferase/adenylyl-removing enzyme"/>
    <property type="match status" value="1"/>
</dbReference>
<dbReference type="FunFam" id="1.20.120.330:FF:000005">
    <property type="entry name" value="Bifunctional glutamine synthetase adenylyltransferase/adenylyl-removing enzyme"/>
    <property type="match status" value="1"/>
</dbReference>
<dbReference type="FunFam" id="1.20.120.330:FF:000008">
    <property type="entry name" value="Bifunctional glutamine synthetase adenylyltransferase/adenylyl-removing enzyme"/>
    <property type="match status" value="1"/>
</dbReference>
<dbReference type="FunFam" id="3.30.460.10:FF:000009">
    <property type="entry name" value="Bifunctional glutamine synthetase adenylyltransferase/adenylyl-removing enzyme"/>
    <property type="match status" value="1"/>
</dbReference>
<dbReference type="FunFam" id="3.30.460.10:FF:000014">
    <property type="entry name" value="Bifunctional glutamine synthetase adenylyltransferase/adenylyl-removing enzyme"/>
    <property type="match status" value="1"/>
</dbReference>
<dbReference type="Gene3D" id="1.20.120.1510">
    <property type="match status" value="1"/>
</dbReference>
<dbReference type="Gene3D" id="3.30.460.10">
    <property type="entry name" value="Beta Polymerase, domain 2"/>
    <property type="match status" value="2"/>
</dbReference>
<dbReference type="Gene3D" id="1.10.4050.10">
    <property type="entry name" value="Glutamine synthase adenylyltransferase GlnE"/>
    <property type="match status" value="1"/>
</dbReference>
<dbReference type="Gene3D" id="1.20.120.330">
    <property type="entry name" value="Nucleotidyltransferases domain 2"/>
    <property type="match status" value="2"/>
</dbReference>
<dbReference type="HAMAP" id="MF_00802">
    <property type="entry name" value="GlnE"/>
    <property type="match status" value="1"/>
</dbReference>
<dbReference type="InterPro" id="IPR023057">
    <property type="entry name" value="GlnE"/>
</dbReference>
<dbReference type="InterPro" id="IPR005190">
    <property type="entry name" value="GlnE_rpt_dom"/>
</dbReference>
<dbReference type="InterPro" id="IPR043519">
    <property type="entry name" value="NT_sf"/>
</dbReference>
<dbReference type="InterPro" id="IPR013546">
    <property type="entry name" value="PII_UdlTrfase/GS_AdlTrfase"/>
</dbReference>
<dbReference type="NCBIfam" id="NF008292">
    <property type="entry name" value="PRK11072.1"/>
    <property type="match status" value="1"/>
</dbReference>
<dbReference type="PANTHER" id="PTHR30621:SF0">
    <property type="entry name" value="BIFUNCTIONAL GLUTAMINE SYNTHETASE ADENYLYLTRANSFERASE_ADENYLYL-REMOVING ENZYME"/>
    <property type="match status" value="1"/>
</dbReference>
<dbReference type="PANTHER" id="PTHR30621">
    <property type="entry name" value="GLUTAMINE SYNTHETASE ADENYLYLTRANSFERASE"/>
    <property type="match status" value="1"/>
</dbReference>
<dbReference type="Pfam" id="PF08335">
    <property type="entry name" value="GlnD_UR_UTase"/>
    <property type="match status" value="2"/>
</dbReference>
<dbReference type="Pfam" id="PF03710">
    <property type="entry name" value="GlnE"/>
    <property type="match status" value="2"/>
</dbReference>
<dbReference type="SUPFAM" id="SSF81301">
    <property type="entry name" value="Nucleotidyltransferase"/>
    <property type="match status" value="2"/>
</dbReference>
<dbReference type="SUPFAM" id="SSF81593">
    <property type="entry name" value="Nucleotidyltransferase substrate binding subunit/domain"/>
    <property type="match status" value="2"/>
</dbReference>
<comment type="function">
    <text evidence="1">Involved in the regulation of glutamine synthetase GlnA, a key enzyme in the process to assimilate ammonia. When cellular nitrogen levels are high, the C-terminal adenylyl transferase (AT) inactivates GlnA by covalent transfer of an adenylyl group from ATP to specific tyrosine residue of GlnA, thus reducing its activity. Conversely, when nitrogen levels are low, the N-terminal adenylyl removase (AR) activates GlnA by removing the adenylyl group by phosphorolysis, increasing its activity. The regulatory region of GlnE binds the signal transduction protein PII (GlnB) which indicates the nitrogen status of the cell.</text>
</comment>
<comment type="catalytic activity">
    <reaction evidence="1">
        <text>[glutamine synthetase]-O(4)-(5'-adenylyl)-L-tyrosine + phosphate = [glutamine synthetase]-L-tyrosine + ADP</text>
        <dbReference type="Rhea" id="RHEA:43716"/>
        <dbReference type="Rhea" id="RHEA-COMP:10660"/>
        <dbReference type="Rhea" id="RHEA-COMP:10661"/>
        <dbReference type="ChEBI" id="CHEBI:43474"/>
        <dbReference type="ChEBI" id="CHEBI:46858"/>
        <dbReference type="ChEBI" id="CHEBI:83624"/>
        <dbReference type="ChEBI" id="CHEBI:456216"/>
        <dbReference type="EC" id="2.7.7.89"/>
    </reaction>
</comment>
<comment type="catalytic activity">
    <reaction evidence="1">
        <text>[glutamine synthetase]-L-tyrosine + ATP = [glutamine synthetase]-O(4)-(5'-adenylyl)-L-tyrosine + diphosphate</text>
        <dbReference type="Rhea" id="RHEA:18589"/>
        <dbReference type="Rhea" id="RHEA-COMP:10660"/>
        <dbReference type="Rhea" id="RHEA-COMP:10661"/>
        <dbReference type="ChEBI" id="CHEBI:30616"/>
        <dbReference type="ChEBI" id="CHEBI:33019"/>
        <dbReference type="ChEBI" id="CHEBI:46858"/>
        <dbReference type="ChEBI" id="CHEBI:83624"/>
        <dbReference type="EC" id="2.7.7.42"/>
    </reaction>
</comment>
<comment type="cofactor">
    <cofactor evidence="1">
        <name>Mg(2+)</name>
        <dbReference type="ChEBI" id="CHEBI:18420"/>
    </cofactor>
</comment>
<comment type="similarity">
    <text evidence="1">Belongs to the GlnE family.</text>
</comment>
<evidence type="ECO:0000255" key="1">
    <source>
        <dbReference type="HAMAP-Rule" id="MF_00802"/>
    </source>
</evidence>
<gene>
    <name evidence="1" type="primary">glnE</name>
    <name type="ordered locus">ECSE_3333</name>
</gene>
<sequence length="946" mass="108331">MKPLSSPLQQYWQTVVERLPEPLAEKSLSAQAKSVLTFSDFVQDSVIAHPEWLTELESQSPQADEWQHYAAWLQEALSNVSDEAGLMRELRLFRRRIMVRIAWAQTLALVTEESILQQLSHLAETLIVAARDWLYDACCREWGTPCNAQGEAQPLLILGMGKLGGGELNFSSDIDLIFAWPEHGCTQGGRRELDNAQFFTRMGQRLIKVLDQPTQDGFVYRVDMRLRPFGESGPLVLSFAALEDYYQEQGRDWERYAMVKARIMGDSEGVYANELRAMLRPFVFRRYIDFSVIQSLRNMKGMIAREVRRRGLTDNIKLGAGGIREIEFIVQVFQLIRGGREPSLQSRSLLPTLSVIAALHLLSENDAEQLRVAYLFLRRLENLLQSINDEQTQTLPSDELNRARLAWAMDFADWPQLTGALTAHMTNVRRVFNELIGDDESETQEESLSEQWRELWQDALQEDDTTPVLAHLSEDDRKQVLTLIADFRKELDKRTIGPRGRQVLDHLMPHLLSDVCAREDAAVTLSRITALLVGIVTRTTYLELLSEFPAALKHLISLCAASPMIASQLARYPLLLDELLDPNTLYQPTATDAYRDELRQYLLRVPEDDEEQQLEALRQFKQAQLLRIAAADIAGTLPVMKVSDHLTWLAEAMIDAVVQQAWVQMVARYGKPNHLNDREGRGFAVVGYGKLGGWELGYSSDLDLIFLHDCPMDAMTDGEREIDGRQFYLRLAQRIMHLFSTRTSSGILYEVDARLRPSGAAGMLVTSAEAFADYQKNEAWTWEHQALVRARVVYGDPQLTAHFDAVRREIMTLPREGKTLQTEVREMREKMRAHLGNKHRDRFDIKADEGGITDIEFITQYLVLRYAHEKPKLTRWSDNVRILELLAQNDIMEEQEAMALTRAYTTLRDELHHLALQELPGHVPEDCFTAERELVRASWQKWLVEE</sequence>
<feature type="chain" id="PRO_1000133903" description="Bifunctional glutamine synthetase adenylyltransferase/adenylyl-removing enzyme">
    <location>
        <begin position="1"/>
        <end position="946"/>
    </location>
</feature>
<feature type="region of interest" description="Adenylyl removase" evidence="1">
    <location>
        <begin position="1"/>
        <end position="440"/>
    </location>
</feature>
<feature type="region of interest" description="Adenylyl transferase" evidence="1">
    <location>
        <begin position="449"/>
        <end position="946"/>
    </location>
</feature>
<protein>
    <recommendedName>
        <fullName evidence="1">Bifunctional glutamine synthetase adenylyltransferase/adenylyl-removing enzyme</fullName>
    </recommendedName>
    <alternativeName>
        <fullName evidence="1">ATP:glutamine synthetase adenylyltransferase</fullName>
    </alternativeName>
    <alternativeName>
        <fullName evidence="1">ATase</fullName>
    </alternativeName>
    <domain>
        <recommendedName>
            <fullName evidence="1">Glutamine synthetase adenylyl-L-tyrosine phosphorylase</fullName>
            <ecNumber evidence="1">2.7.7.89</ecNumber>
        </recommendedName>
        <alternativeName>
            <fullName evidence="1">Adenylyl removase</fullName>
            <shortName evidence="1">AR</shortName>
            <shortName evidence="1">AT-N</shortName>
        </alternativeName>
    </domain>
    <domain>
        <recommendedName>
            <fullName evidence="1">Glutamine synthetase adenylyl transferase</fullName>
            <ecNumber evidence="1">2.7.7.42</ecNumber>
        </recommendedName>
        <alternativeName>
            <fullName evidence="1">Adenylyl transferase</fullName>
            <shortName evidence="1">AT</shortName>
            <shortName evidence="1">AT-C</shortName>
        </alternativeName>
    </domain>
</protein>
<organism>
    <name type="scientific">Escherichia coli (strain SE11)</name>
    <dbReference type="NCBI Taxonomy" id="409438"/>
    <lineage>
        <taxon>Bacteria</taxon>
        <taxon>Pseudomonadati</taxon>
        <taxon>Pseudomonadota</taxon>
        <taxon>Gammaproteobacteria</taxon>
        <taxon>Enterobacterales</taxon>
        <taxon>Enterobacteriaceae</taxon>
        <taxon>Escherichia</taxon>
    </lineage>
</organism>
<accession>B6I424</accession>